<organism>
    <name type="scientific">Methanosarcina acetivorans (strain ATCC 35395 / DSM 2834 / JCM 12185 / C2A)</name>
    <dbReference type="NCBI Taxonomy" id="188937"/>
    <lineage>
        <taxon>Archaea</taxon>
        <taxon>Methanobacteriati</taxon>
        <taxon>Methanobacteriota</taxon>
        <taxon>Stenosarchaea group</taxon>
        <taxon>Methanomicrobia</taxon>
        <taxon>Methanosarcinales</taxon>
        <taxon>Methanosarcinaceae</taxon>
        <taxon>Methanosarcina</taxon>
    </lineage>
</organism>
<comment type="function">
    <text evidence="1">Specifically catalyzes the NAD or NADP-dependent dehydrogenation of L-aspartate to iminoaspartate.</text>
</comment>
<comment type="catalytic activity">
    <reaction evidence="1">
        <text>L-aspartate + NADP(+) + H2O = oxaloacetate + NH4(+) + NADPH + H(+)</text>
        <dbReference type="Rhea" id="RHEA:11784"/>
        <dbReference type="ChEBI" id="CHEBI:15377"/>
        <dbReference type="ChEBI" id="CHEBI:15378"/>
        <dbReference type="ChEBI" id="CHEBI:16452"/>
        <dbReference type="ChEBI" id="CHEBI:28938"/>
        <dbReference type="ChEBI" id="CHEBI:29991"/>
        <dbReference type="ChEBI" id="CHEBI:57783"/>
        <dbReference type="ChEBI" id="CHEBI:58349"/>
        <dbReference type="EC" id="1.4.1.21"/>
    </reaction>
</comment>
<comment type="catalytic activity">
    <reaction evidence="1">
        <text>L-aspartate + NAD(+) + H2O = oxaloacetate + NH4(+) + NADH + H(+)</text>
        <dbReference type="Rhea" id="RHEA:11788"/>
        <dbReference type="ChEBI" id="CHEBI:15377"/>
        <dbReference type="ChEBI" id="CHEBI:15378"/>
        <dbReference type="ChEBI" id="CHEBI:16452"/>
        <dbReference type="ChEBI" id="CHEBI:28938"/>
        <dbReference type="ChEBI" id="CHEBI:29991"/>
        <dbReference type="ChEBI" id="CHEBI:57540"/>
        <dbReference type="ChEBI" id="CHEBI:57945"/>
        <dbReference type="EC" id="1.4.1.21"/>
    </reaction>
</comment>
<comment type="pathway">
    <text evidence="1">Cofactor biosynthesis; NAD(+) biosynthesis; iminoaspartate from L-aspartate (dehydrogenase route): step 1/1.</text>
</comment>
<comment type="miscellaneous">
    <text evidence="1">The iminoaspartate product is unstable in aqueous solution and can decompose to oxaloacetate and ammonia.</text>
</comment>
<comment type="similarity">
    <text evidence="1">Belongs to the L-aspartate dehydrogenase family.</text>
</comment>
<sequence length="271" mass="28578">MLKIGIVGCGFIGGQICRAIDGGEVSAELYALCDSSESKALELAASLKTCKPSYMKIEELIRGVDLIIESASQNAVRFIVPQALKAGCDVMILSVGALADEELRDTLFGLAKEHNCKLYFPSGAVVGIDGLNSASAAGISSVTLSTRKPPAGLMGAPYVVEHGIELEKLEKKTVLFEGPASEAVKAFPANVNVAATISLAGIGFERTRVKVIADPSLFRNVHEIIVEGEFGKFSTRVENLPSPENPKTSYLAALSAVSTLKKILNPVQIGT</sequence>
<protein>
    <recommendedName>
        <fullName evidence="1">L-aspartate dehydrogenase</fullName>
        <ecNumber evidence="1">1.4.1.21</ecNumber>
    </recommendedName>
</protein>
<keyword id="KW-0520">NAD</keyword>
<keyword id="KW-0521">NADP</keyword>
<keyword id="KW-0560">Oxidoreductase</keyword>
<keyword id="KW-0662">Pyridine nucleotide biosynthesis</keyword>
<keyword id="KW-1185">Reference proteome</keyword>
<reference key="1">
    <citation type="journal article" date="2002" name="Genome Res.">
        <title>The genome of Methanosarcina acetivorans reveals extensive metabolic and physiological diversity.</title>
        <authorList>
            <person name="Galagan J.E."/>
            <person name="Nusbaum C."/>
            <person name="Roy A."/>
            <person name="Endrizzi M.G."/>
            <person name="Macdonald P."/>
            <person name="FitzHugh W."/>
            <person name="Calvo S."/>
            <person name="Engels R."/>
            <person name="Smirnov S."/>
            <person name="Atnoor D."/>
            <person name="Brown A."/>
            <person name="Allen N."/>
            <person name="Naylor J."/>
            <person name="Stange-Thomann N."/>
            <person name="DeArellano K."/>
            <person name="Johnson R."/>
            <person name="Linton L."/>
            <person name="McEwan P."/>
            <person name="McKernan K."/>
            <person name="Talamas J."/>
            <person name="Tirrell A."/>
            <person name="Ye W."/>
            <person name="Zimmer A."/>
            <person name="Barber R.D."/>
            <person name="Cann I."/>
            <person name="Graham D.E."/>
            <person name="Grahame D.A."/>
            <person name="Guss A.M."/>
            <person name="Hedderich R."/>
            <person name="Ingram-Smith C."/>
            <person name="Kuettner H.C."/>
            <person name="Krzycki J.A."/>
            <person name="Leigh J.A."/>
            <person name="Li W."/>
            <person name="Liu J."/>
            <person name="Mukhopadhyay B."/>
            <person name="Reeve J.N."/>
            <person name="Smith K."/>
            <person name="Springer T.A."/>
            <person name="Umayam L.A."/>
            <person name="White O."/>
            <person name="White R.H."/>
            <person name="de Macario E.C."/>
            <person name="Ferry J.G."/>
            <person name="Jarrell K.F."/>
            <person name="Jing H."/>
            <person name="Macario A.J.L."/>
            <person name="Paulsen I.T."/>
            <person name="Pritchett M."/>
            <person name="Sowers K.R."/>
            <person name="Swanson R.V."/>
            <person name="Zinder S.H."/>
            <person name="Lander E."/>
            <person name="Metcalf W.W."/>
            <person name="Birren B."/>
        </authorList>
    </citation>
    <scope>NUCLEOTIDE SEQUENCE [LARGE SCALE GENOMIC DNA]</scope>
    <source>
        <strain>ATCC 35395 / DSM 2834 / JCM 12185 / C2A</strain>
    </source>
</reference>
<gene>
    <name evidence="1" type="primary">nadX</name>
    <name type="ordered locus">MA_0958</name>
</gene>
<name>ASPD_METAC</name>
<feature type="chain" id="PRO_0000144895" description="L-aspartate dehydrogenase">
    <location>
        <begin position="1"/>
        <end position="271"/>
    </location>
</feature>
<feature type="active site" evidence="1">
    <location>
        <position position="222"/>
    </location>
</feature>
<feature type="binding site" evidence="1">
    <location>
        <position position="124"/>
    </location>
    <ligand>
        <name>NAD(+)</name>
        <dbReference type="ChEBI" id="CHEBI:57540"/>
    </ligand>
</feature>
<feature type="binding site" evidence="1">
    <location>
        <position position="192"/>
    </location>
    <ligand>
        <name>NAD(+)</name>
        <dbReference type="ChEBI" id="CHEBI:57540"/>
    </ligand>
</feature>
<evidence type="ECO:0000255" key="1">
    <source>
        <dbReference type="HAMAP-Rule" id="MF_01265"/>
    </source>
</evidence>
<dbReference type="EC" id="1.4.1.21" evidence="1"/>
<dbReference type="EMBL" id="AE010299">
    <property type="protein sequence ID" value="AAM04391.1"/>
    <property type="molecule type" value="Genomic_DNA"/>
</dbReference>
<dbReference type="RefSeq" id="WP_011020996.1">
    <property type="nucleotide sequence ID" value="NC_003552.1"/>
</dbReference>
<dbReference type="SMR" id="Q8TS47"/>
<dbReference type="FunCoup" id="Q8TS47">
    <property type="interactions" value="96"/>
</dbReference>
<dbReference type="STRING" id="188937.MA_0958"/>
<dbReference type="EnsemblBacteria" id="AAM04391">
    <property type="protein sequence ID" value="AAM04391"/>
    <property type="gene ID" value="MA_0958"/>
</dbReference>
<dbReference type="GeneID" id="1472848"/>
<dbReference type="KEGG" id="mac:MA_0958"/>
<dbReference type="HOGENOM" id="CLU_089550_0_0_2"/>
<dbReference type="InParanoid" id="Q8TS47"/>
<dbReference type="OrthoDB" id="15415at2157"/>
<dbReference type="PhylomeDB" id="Q8TS47"/>
<dbReference type="UniPathway" id="UPA00253">
    <property type="reaction ID" value="UER00456"/>
</dbReference>
<dbReference type="Proteomes" id="UP000002487">
    <property type="component" value="Chromosome"/>
</dbReference>
<dbReference type="GO" id="GO:0033735">
    <property type="term" value="F:aspartate dehydrogenase activity"/>
    <property type="evidence" value="ECO:0007669"/>
    <property type="project" value="UniProtKB-EC"/>
</dbReference>
<dbReference type="GO" id="GO:0051287">
    <property type="term" value="F:NAD binding"/>
    <property type="evidence" value="ECO:0007669"/>
    <property type="project" value="UniProtKB-UniRule"/>
</dbReference>
<dbReference type="GO" id="GO:0050661">
    <property type="term" value="F:NADP binding"/>
    <property type="evidence" value="ECO:0007669"/>
    <property type="project" value="UniProtKB-UniRule"/>
</dbReference>
<dbReference type="GO" id="GO:0016639">
    <property type="term" value="F:oxidoreductase activity, acting on the CH-NH2 group of donors, NAD or NADP as acceptor"/>
    <property type="evidence" value="ECO:0007669"/>
    <property type="project" value="UniProtKB-UniRule"/>
</dbReference>
<dbReference type="GO" id="GO:0009435">
    <property type="term" value="P:NAD biosynthetic process"/>
    <property type="evidence" value="ECO:0007669"/>
    <property type="project" value="UniProtKB-UniRule"/>
</dbReference>
<dbReference type="Gene3D" id="3.30.360.10">
    <property type="entry name" value="Dihydrodipicolinate Reductase, domain 2"/>
    <property type="match status" value="1"/>
</dbReference>
<dbReference type="Gene3D" id="3.40.50.720">
    <property type="entry name" value="NAD(P)-binding Rossmann-like Domain"/>
    <property type="match status" value="1"/>
</dbReference>
<dbReference type="HAMAP" id="MF_01265">
    <property type="entry name" value="NadX"/>
    <property type="match status" value="1"/>
</dbReference>
<dbReference type="InterPro" id="IPR005106">
    <property type="entry name" value="Asp/hSer_DH_NAD-bd"/>
</dbReference>
<dbReference type="InterPro" id="IPR002811">
    <property type="entry name" value="Asp_DH"/>
</dbReference>
<dbReference type="InterPro" id="IPR022487">
    <property type="entry name" value="Asp_DH_arc"/>
</dbReference>
<dbReference type="InterPro" id="IPR020626">
    <property type="entry name" value="Asp_DH_prok"/>
</dbReference>
<dbReference type="InterPro" id="IPR011182">
    <property type="entry name" value="L-Asp_DH"/>
</dbReference>
<dbReference type="InterPro" id="IPR036291">
    <property type="entry name" value="NAD(P)-bd_dom_sf"/>
</dbReference>
<dbReference type="NCBIfam" id="TIGR03855">
    <property type="entry name" value="NAD_NadX"/>
    <property type="match status" value="1"/>
</dbReference>
<dbReference type="NCBIfam" id="NF009828">
    <property type="entry name" value="PRK13303.1-3"/>
    <property type="match status" value="1"/>
</dbReference>
<dbReference type="NCBIfam" id="NF009829">
    <property type="entry name" value="PRK13303.1-4"/>
    <property type="match status" value="1"/>
</dbReference>
<dbReference type="NCBIfam" id="NF009830">
    <property type="entry name" value="PRK13304.1"/>
    <property type="match status" value="1"/>
</dbReference>
<dbReference type="PANTHER" id="PTHR31873:SF6">
    <property type="entry name" value="ASPARTATE DEHYDROGENASE DOMAIN-CONTAINING PROTEIN"/>
    <property type="match status" value="1"/>
</dbReference>
<dbReference type="PANTHER" id="PTHR31873">
    <property type="entry name" value="L-ASPARTATE DEHYDROGENASE-RELATED"/>
    <property type="match status" value="1"/>
</dbReference>
<dbReference type="Pfam" id="PF01958">
    <property type="entry name" value="Asp_DH_C"/>
    <property type="match status" value="1"/>
</dbReference>
<dbReference type="Pfam" id="PF03447">
    <property type="entry name" value="NAD_binding_3"/>
    <property type="match status" value="1"/>
</dbReference>
<dbReference type="PIRSF" id="PIRSF005227">
    <property type="entry name" value="Asp_dh_NAD_syn"/>
    <property type="match status" value="1"/>
</dbReference>
<dbReference type="SUPFAM" id="SSF55347">
    <property type="entry name" value="Glyceraldehyde-3-phosphate dehydrogenase-like, C-terminal domain"/>
    <property type="match status" value="1"/>
</dbReference>
<dbReference type="SUPFAM" id="SSF51735">
    <property type="entry name" value="NAD(P)-binding Rossmann-fold domains"/>
    <property type="match status" value="1"/>
</dbReference>
<accession>Q8TS47</accession>
<proteinExistence type="inferred from homology"/>